<protein>
    <recommendedName>
        <fullName evidence="1">Adenine phosphoribosyltransferase</fullName>
        <shortName evidence="1">APRT</shortName>
        <ecNumber evidence="1">2.4.2.7</ecNumber>
    </recommendedName>
</protein>
<keyword id="KW-0963">Cytoplasm</keyword>
<keyword id="KW-0328">Glycosyltransferase</keyword>
<keyword id="KW-0660">Purine salvage</keyword>
<keyword id="KW-1185">Reference proteome</keyword>
<keyword id="KW-0808">Transferase</keyword>
<accession>Q6MTD4</accession>
<dbReference type="EC" id="2.4.2.7" evidence="1"/>
<dbReference type="EMBL" id="BX293980">
    <property type="protein sequence ID" value="CAE77102.1"/>
    <property type="molecule type" value="Genomic_DNA"/>
</dbReference>
<dbReference type="RefSeq" id="NP_975460.1">
    <property type="nucleotide sequence ID" value="NC_005364.2"/>
</dbReference>
<dbReference type="RefSeq" id="WP_011166658.1">
    <property type="nucleotide sequence ID" value="NC_005364.2"/>
</dbReference>
<dbReference type="SMR" id="Q6MTD4"/>
<dbReference type="STRING" id="272632.MSC_0474"/>
<dbReference type="KEGG" id="mmy:MSC_0474"/>
<dbReference type="PATRIC" id="fig|272632.4.peg.514"/>
<dbReference type="eggNOG" id="COG0503">
    <property type="taxonomic scope" value="Bacteria"/>
</dbReference>
<dbReference type="HOGENOM" id="CLU_063339_3_0_14"/>
<dbReference type="SABIO-RK" id="Q6MTD4"/>
<dbReference type="UniPathway" id="UPA00588">
    <property type="reaction ID" value="UER00646"/>
</dbReference>
<dbReference type="Proteomes" id="UP000001016">
    <property type="component" value="Chromosome"/>
</dbReference>
<dbReference type="GO" id="GO:0005737">
    <property type="term" value="C:cytoplasm"/>
    <property type="evidence" value="ECO:0007669"/>
    <property type="project" value="UniProtKB-SubCell"/>
</dbReference>
<dbReference type="GO" id="GO:0002055">
    <property type="term" value="F:adenine binding"/>
    <property type="evidence" value="ECO:0007669"/>
    <property type="project" value="TreeGrafter"/>
</dbReference>
<dbReference type="GO" id="GO:0003999">
    <property type="term" value="F:adenine phosphoribosyltransferase activity"/>
    <property type="evidence" value="ECO:0007669"/>
    <property type="project" value="UniProtKB-UniRule"/>
</dbReference>
<dbReference type="GO" id="GO:0016208">
    <property type="term" value="F:AMP binding"/>
    <property type="evidence" value="ECO:0007669"/>
    <property type="project" value="TreeGrafter"/>
</dbReference>
<dbReference type="GO" id="GO:0006168">
    <property type="term" value="P:adenine salvage"/>
    <property type="evidence" value="ECO:0007669"/>
    <property type="project" value="InterPro"/>
</dbReference>
<dbReference type="GO" id="GO:0044209">
    <property type="term" value="P:AMP salvage"/>
    <property type="evidence" value="ECO:0007669"/>
    <property type="project" value="UniProtKB-UniRule"/>
</dbReference>
<dbReference type="GO" id="GO:0006166">
    <property type="term" value="P:purine ribonucleoside salvage"/>
    <property type="evidence" value="ECO:0007669"/>
    <property type="project" value="UniProtKB-KW"/>
</dbReference>
<dbReference type="CDD" id="cd06223">
    <property type="entry name" value="PRTases_typeI"/>
    <property type="match status" value="1"/>
</dbReference>
<dbReference type="FunFam" id="3.40.50.2020:FF:000021">
    <property type="entry name" value="Adenine phosphoribosyltransferase"/>
    <property type="match status" value="1"/>
</dbReference>
<dbReference type="Gene3D" id="3.40.50.2020">
    <property type="match status" value="1"/>
</dbReference>
<dbReference type="HAMAP" id="MF_00004">
    <property type="entry name" value="Aden_phosphoribosyltr"/>
    <property type="match status" value="1"/>
</dbReference>
<dbReference type="InterPro" id="IPR005764">
    <property type="entry name" value="Ade_phspho_trans"/>
</dbReference>
<dbReference type="InterPro" id="IPR000836">
    <property type="entry name" value="PRibTrfase_dom"/>
</dbReference>
<dbReference type="InterPro" id="IPR029057">
    <property type="entry name" value="PRTase-like"/>
</dbReference>
<dbReference type="InterPro" id="IPR050054">
    <property type="entry name" value="UPRTase/APRTase"/>
</dbReference>
<dbReference type="NCBIfam" id="TIGR01090">
    <property type="entry name" value="apt"/>
    <property type="match status" value="1"/>
</dbReference>
<dbReference type="NCBIfam" id="NF002636">
    <property type="entry name" value="PRK02304.1-5"/>
    <property type="match status" value="1"/>
</dbReference>
<dbReference type="PANTHER" id="PTHR32315">
    <property type="entry name" value="ADENINE PHOSPHORIBOSYLTRANSFERASE"/>
    <property type="match status" value="1"/>
</dbReference>
<dbReference type="PANTHER" id="PTHR32315:SF3">
    <property type="entry name" value="ADENINE PHOSPHORIBOSYLTRANSFERASE"/>
    <property type="match status" value="1"/>
</dbReference>
<dbReference type="Pfam" id="PF00156">
    <property type="entry name" value="Pribosyltran"/>
    <property type="match status" value="1"/>
</dbReference>
<dbReference type="SUPFAM" id="SSF53271">
    <property type="entry name" value="PRTase-like"/>
    <property type="match status" value="1"/>
</dbReference>
<dbReference type="PROSITE" id="PS00103">
    <property type="entry name" value="PUR_PYR_PR_TRANSFER"/>
    <property type="match status" value="1"/>
</dbReference>
<evidence type="ECO:0000255" key="1">
    <source>
        <dbReference type="HAMAP-Rule" id="MF_00004"/>
    </source>
</evidence>
<gene>
    <name evidence="1" type="primary">apt</name>
    <name type="ordered locus">MSC_0474</name>
</gene>
<feature type="chain" id="PRO_0000149414" description="Adenine phosphoribosyltransferase">
    <location>
        <begin position="1"/>
        <end position="170"/>
    </location>
</feature>
<name>APT_MYCMS</name>
<organism>
    <name type="scientific">Mycoplasma mycoides subsp. mycoides SC (strain CCUG 32753 / NCTC 10114 / PG1)</name>
    <dbReference type="NCBI Taxonomy" id="272632"/>
    <lineage>
        <taxon>Bacteria</taxon>
        <taxon>Bacillati</taxon>
        <taxon>Mycoplasmatota</taxon>
        <taxon>Mollicutes</taxon>
        <taxon>Mycoplasmataceae</taxon>
        <taxon>Mycoplasma</taxon>
    </lineage>
</organism>
<sequence length="170" mass="19293">MNLKEFVVDVKDFPKQGIVFKDITPLLNNKDAFKYTIDQMADFIKQLDVDVVVAPEARGFLLASAVAYAANKRFVLVRKPNKLPREVYDVEYSLEYGTNHQQIHVGDLKPNDKVVVIDDVLATGGTMQAIIDLVKLSKAEVIGMSFLIDLTFLHDVNLFDQYKVQKLIKY</sequence>
<proteinExistence type="inferred from homology"/>
<comment type="function">
    <text evidence="1">Catalyzes a salvage reaction resulting in the formation of AMP, that is energically less costly than de novo synthesis.</text>
</comment>
<comment type="catalytic activity">
    <reaction evidence="1">
        <text>AMP + diphosphate = 5-phospho-alpha-D-ribose 1-diphosphate + adenine</text>
        <dbReference type="Rhea" id="RHEA:16609"/>
        <dbReference type="ChEBI" id="CHEBI:16708"/>
        <dbReference type="ChEBI" id="CHEBI:33019"/>
        <dbReference type="ChEBI" id="CHEBI:58017"/>
        <dbReference type="ChEBI" id="CHEBI:456215"/>
        <dbReference type="EC" id="2.4.2.7"/>
    </reaction>
</comment>
<comment type="pathway">
    <text evidence="1">Purine metabolism; AMP biosynthesis via salvage pathway; AMP from adenine: step 1/1.</text>
</comment>
<comment type="subunit">
    <text evidence="1">Homodimer.</text>
</comment>
<comment type="subcellular location">
    <subcellularLocation>
        <location evidence="1">Cytoplasm</location>
    </subcellularLocation>
</comment>
<comment type="similarity">
    <text evidence="1">Belongs to the purine/pyrimidine phosphoribosyltransferase family.</text>
</comment>
<reference key="1">
    <citation type="journal article" date="2004" name="Genome Res.">
        <title>The genome sequence of Mycoplasma mycoides subsp. mycoides SC type strain PG1T, the causative agent of contagious bovine pleuropneumonia (CBPP).</title>
        <authorList>
            <person name="Westberg J."/>
            <person name="Persson A."/>
            <person name="Holmberg A."/>
            <person name="Goesmann A."/>
            <person name="Lundeberg J."/>
            <person name="Johansson K.-E."/>
            <person name="Pettersson B."/>
            <person name="Uhlen M."/>
        </authorList>
    </citation>
    <scope>NUCLEOTIDE SEQUENCE [LARGE SCALE GENOMIC DNA]</scope>
    <source>
        <strain>CCUG 32753 / NCTC 10114 / PG1</strain>
    </source>
</reference>